<proteinExistence type="inferred from homology"/>
<protein>
    <recommendedName>
        <fullName evidence="1">Arginine biosynthesis bifunctional protein ArgJ</fullName>
    </recommendedName>
    <domain>
        <recommendedName>
            <fullName evidence="1">Glutamate N-acetyltransferase</fullName>
            <ecNumber evidence="1">2.3.1.35</ecNumber>
        </recommendedName>
        <alternativeName>
            <fullName evidence="1">Ornithine acetyltransferase</fullName>
            <shortName evidence="1">OATase</shortName>
        </alternativeName>
        <alternativeName>
            <fullName evidence="1">Ornithine transacetylase</fullName>
        </alternativeName>
    </domain>
    <domain>
        <recommendedName>
            <fullName evidence="1">Amino-acid acetyltransferase</fullName>
            <ecNumber evidence="1">2.3.1.1</ecNumber>
        </recommendedName>
        <alternativeName>
            <fullName evidence="1">N-acetylglutamate synthase</fullName>
            <shortName evidence="1">AGSase</shortName>
        </alternativeName>
    </domain>
    <component>
        <recommendedName>
            <fullName evidence="1">Arginine biosynthesis bifunctional protein ArgJ alpha chain</fullName>
        </recommendedName>
    </component>
    <component>
        <recommendedName>
            <fullName evidence="1">Arginine biosynthesis bifunctional protein ArgJ beta chain</fullName>
        </recommendedName>
    </component>
</protein>
<keyword id="KW-0012">Acyltransferase</keyword>
<keyword id="KW-0028">Amino-acid biosynthesis</keyword>
<keyword id="KW-0055">Arginine biosynthesis</keyword>
<keyword id="KW-0068">Autocatalytic cleavage</keyword>
<keyword id="KW-0963">Cytoplasm</keyword>
<keyword id="KW-0511">Multifunctional enzyme</keyword>
<keyword id="KW-0808">Transferase</keyword>
<gene>
    <name evidence="1" type="primary">argJ</name>
    <name type="ordered locus">NMA0435</name>
</gene>
<reference key="1">
    <citation type="journal article" date="2000" name="Nature">
        <title>Complete DNA sequence of a serogroup A strain of Neisseria meningitidis Z2491.</title>
        <authorList>
            <person name="Parkhill J."/>
            <person name="Achtman M."/>
            <person name="James K.D."/>
            <person name="Bentley S.D."/>
            <person name="Churcher C.M."/>
            <person name="Klee S.R."/>
            <person name="Morelli G."/>
            <person name="Basham D."/>
            <person name="Brown D."/>
            <person name="Chillingworth T."/>
            <person name="Davies R.M."/>
            <person name="Davis P."/>
            <person name="Devlin K."/>
            <person name="Feltwell T."/>
            <person name="Hamlin N."/>
            <person name="Holroyd S."/>
            <person name="Jagels K."/>
            <person name="Leather S."/>
            <person name="Moule S."/>
            <person name="Mungall K.L."/>
            <person name="Quail M.A."/>
            <person name="Rajandream M.A."/>
            <person name="Rutherford K.M."/>
            <person name="Simmonds M."/>
            <person name="Skelton J."/>
            <person name="Whitehead S."/>
            <person name="Spratt B.G."/>
            <person name="Barrell B.G."/>
        </authorList>
    </citation>
    <scope>NUCLEOTIDE SEQUENCE [LARGE SCALE GENOMIC DNA]</scope>
    <source>
        <strain>DSM 15465 / Z2491</strain>
    </source>
</reference>
<organism>
    <name type="scientific">Neisseria meningitidis serogroup A / serotype 4A (strain DSM 15465 / Z2491)</name>
    <dbReference type="NCBI Taxonomy" id="122587"/>
    <lineage>
        <taxon>Bacteria</taxon>
        <taxon>Pseudomonadati</taxon>
        <taxon>Pseudomonadota</taxon>
        <taxon>Betaproteobacteria</taxon>
        <taxon>Neisseriales</taxon>
        <taxon>Neisseriaceae</taxon>
        <taxon>Neisseria</taxon>
    </lineage>
</organism>
<comment type="function">
    <text evidence="1">Catalyzes two activities which are involved in the cyclic version of arginine biosynthesis: the synthesis of N-acetylglutamate from glutamate and acetyl-CoA as the acetyl donor, and of ornithine by transacetylation between N(2)-acetylornithine and glutamate.</text>
</comment>
<comment type="catalytic activity">
    <reaction evidence="1">
        <text>N(2)-acetyl-L-ornithine + L-glutamate = N-acetyl-L-glutamate + L-ornithine</text>
        <dbReference type="Rhea" id="RHEA:15349"/>
        <dbReference type="ChEBI" id="CHEBI:29985"/>
        <dbReference type="ChEBI" id="CHEBI:44337"/>
        <dbReference type="ChEBI" id="CHEBI:46911"/>
        <dbReference type="ChEBI" id="CHEBI:57805"/>
        <dbReference type="EC" id="2.3.1.35"/>
    </reaction>
</comment>
<comment type="catalytic activity">
    <reaction evidence="1">
        <text>L-glutamate + acetyl-CoA = N-acetyl-L-glutamate + CoA + H(+)</text>
        <dbReference type="Rhea" id="RHEA:24292"/>
        <dbReference type="ChEBI" id="CHEBI:15378"/>
        <dbReference type="ChEBI" id="CHEBI:29985"/>
        <dbReference type="ChEBI" id="CHEBI:44337"/>
        <dbReference type="ChEBI" id="CHEBI:57287"/>
        <dbReference type="ChEBI" id="CHEBI:57288"/>
        <dbReference type="EC" id="2.3.1.1"/>
    </reaction>
</comment>
<comment type="pathway">
    <text evidence="1">Amino-acid biosynthesis; L-arginine biosynthesis; L-ornithine and N-acetyl-L-glutamate from L-glutamate and N(2)-acetyl-L-ornithine (cyclic): step 1/1.</text>
</comment>
<comment type="pathway">
    <text evidence="1">Amino-acid biosynthesis; L-arginine biosynthesis; N(2)-acetyl-L-ornithine from L-glutamate: step 1/4.</text>
</comment>
<comment type="subunit">
    <text evidence="1">Heterotetramer of two alpha and two beta chains.</text>
</comment>
<comment type="subcellular location">
    <subcellularLocation>
        <location evidence="1">Cytoplasm</location>
    </subcellularLocation>
</comment>
<comment type="similarity">
    <text evidence="1">Belongs to the ArgJ family.</text>
</comment>
<feature type="chain" id="PRO_0000002199" description="Arginine biosynthesis bifunctional protein ArgJ alpha chain" evidence="1">
    <location>
        <begin position="1"/>
        <end position="189"/>
    </location>
</feature>
<feature type="chain" id="PRO_0000002200" description="Arginine biosynthesis bifunctional protein ArgJ beta chain" evidence="1">
    <location>
        <begin position="190"/>
        <end position="406"/>
    </location>
</feature>
<feature type="active site" description="Nucleophile" evidence="1">
    <location>
        <position position="190"/>
    </location>
</feature>
<feature type="binding site" evidence="1">
    <location>
        <position position="152"/>
    </location>
    <ligand>
        <name>substrate</name>
    </ligand>
</feature>
<feature type="binding site" evidence="1">
    <location>
        <position position="179"/>
    </location>
    <ligand>
        <name>substrate</name>
    </ligand>
</feature>
<feature type="binding site" evidence="1">
    <location>
        <position position="190"/>
    </location>
    <ligand>
        <name>substrate</name>
    </ligand>
</feature>
<feature type="binding site" evidence="1">
    <location>
        <position position="277"/>
    </location>
    <ligand>
        <name>substrate</name>
    </ligand>
</feature>
<feature type="binding site" evidence="1">
    <location>
        <position position="401"/>
    </location>
    <ligand>
        <name>substrate</name>
    </ligand>
</feature>
<feature type="binding site" evidence="1">
    <location>
        <position position="406"/>
    </location>
    <ligand>
        <name>substrate</name>
    </ligand>
</feature>
<feature type="site" description="Involved in the stabilization of negative charge on the oxyanion by the formation of the oxyanion hole" evidence="1">
    <location>
        <position position="119"/>
    </location>
</feature>
<feature type="site" description="Involved in the stabilization of negative charge on the oxyanion by the formation of the oxyanion hole" evidence="1">
    <location>
        <position position="120"/>
    </location>
</feature>
<feature type="site" description="Cleavage; by autolysis" evidence="1">
    <location>
        <begin position="189"/>
        <end position="190"/>
    </location>
</feature>
<dbReference type="EC" id="2.3.1.35" evidence="1"/>
<dbReference type="EC" id="2.3.1.1" evidence="1"/>
<dbReference type="EMBL" id="AL157959">
    <property type="protein sequence ID" value="CAM07722.1"/>
    <property type="molecule type" value="Genomic_DNA"/>
</dbReference>
<dbReference type="RefSeq" id="WP_002235259.1">
    <property type="nucleotide sequence ID" value="NC_003116.1"/>
</dbReference>
<dbReference type="SMR" id="P63573"/>
<dbReference type="MEROPS" id="T05.001"/>
<dbReference type="EnsemblBacteria" id="CAM07722">
    <property type="protein sequence ID" value="CAM07722"/>
    <property type="gene ID" value="NMA0435"/>
</dbReference>
<dbReference type="GeneID" id="93386921"/>
<dbReference type="KEGG" id="nma:NMA0435"/>
<dbReference type="HOGENOM" id="CLU_027172_1_0_4"/>
<dbReference type="UniPathway" id="UPA00068">
    <property type="reaction ID" value="UER00106"/>
</dbReference>
<dbReference type="UniPathway" id="UPA00068">
    <property type="reaction ID" value="UER00111"/>
</dbReference>
<dbReference type="Proteomes" id="UP000000626">
    <property type="component" value="Chromosome"/>
</dbReference>
<dbReference type="GO" id="GO:0005737">
    <property type="term" value="C:cytoplasm"/>
    <property type="evidence" value="ECO:0007669"/>
    <property type="project" value="UniProtKB-SubCell"/>
</dbReference>
<dbReference type="GO" id="GO:0004358">
    <property type="term" value="F:glutamate N-acetyltransferase activity"/>
    <property type="evidence" value="ECO:0007669"/>
    <property type="project" value="UniProtKB-UniRule"/>
</dbReference>
<dbReference type="GO" id="GO:0004042">
    <property type="term" value="F:L-glutamate N-acetyltransferase activity"/>
    <property type="evidence" value="ECO:0007669"/>
    <property type="project" value="UniProtKB-UniRule"/>
</dbReference>
<dbReference type="GO" id="GO:0006526">
    <property type="term" value="P:L-arginine biosynthetic process"/>
    <property type="evidence" value="ECO:0007669"/>
    <property type="project" value="UniProtKB-UniRule"/>
</dbReference>
<dbReference type="GO" id="GO:0006592">
    <property type="term" value="P:ornithine biosynthetic process"/>
    <property type="evidence" value="ECO:0007669"/>
    <property type="project" value="TreeGrafter"/>
</dbReference>
<dbReference type="CDD" id="cd02152">
    <property type="entry name" value="OAT"/>
    <property type="match status" value="1"/>
</dbReference>
<dbReference type="FunFam" id="3.10.20.340:FF:000001">
    <property type="entry name" value="Arginine biosynthesis bifunctional protein ArgJ, chloroplastic"/>
    <property type="match status" value="1"/>
</dbReference>
<dbReference type="FunFam" id="3.60.70.12:FF:000001">
    <property type="entry name" value="Arginine biosynthesis bifunctional protein ArgJ, chloroplastic"/>
    <property type="match status" value="1"/>
</dbReference>
<dbReference type="Gene3D" id="3.10.20.340">
    <property type="entry name" value="ArgJ beta chain, C-terminal domain"/>
    <property type="match status" value="1"/>
</dbReference>
<dbReference type="Gene3D" id="3.60.70.12">
    <property type="entry name" value="L-amino peptidase D-ALA esterase/amidase"/>
    <property type="match status" value="1"/>
</dbReference>
<dbReference type="HAMAP" id="MF_01106">
    <property type="entry name" value="ArgJ"/>
    <property type="match status" value="1"/>
</dbReference>
<dbReference type="InterPro" id="IPR002813">
    <property type="entry name" value="Arg_biosynth_ArgJ"/>
</dbReference>
<dbReference type="InterPro" id="IPR016117">
    <property type="entry name" value="ArgJ-like_dom_sf"/>
</dbReference>
<dbReference type="InterPro" id="IPR042195">
    <property type="entry name" value="ArgJ_beta_C"/>
</dbReference>
<dbReference type="NCBIfam" id="TIGR00120">
    <property type="entry name" value="ArgJ"/>
    <property type="match status" value="1"/>
</dbReference>
<dbReference type="NCBIfam" id="NF003802">
    <property type="entry name" value="PRK05388.1"/>
    <property type="match status" value="1"/>
</dbReference>
<dbReference type="PANTHER" id="PTHR23100">
    <property type="entry name" value="ARGININE BIOSYNTHESIS BIFUNCTIONAL PROTEIN ARGJ"/>
    <property type="match status" value="1"/>
</dbReference>
<dbReference type="PANTHER" id="PTHR23100:SF0">
    <property type="entry name" value="ARGININE BIOSYNTHESIS BIFUNCTIONAL PROTEIN ARGJ, MITOCHONDRIAL"/>
    <property type="match status" value="1"/>
</dbReference>
<dbReference type="Pfam" id="PF01960">
    <property type="entry name" value="ArgJ"/>
    <property type="match status" value="1"/>
</dbReference>
<dbReference type="SUPFAM" id="SSF56266">
    <property type="entry name" value="DmpA/ArgJ-like"/>
    <property type="match status" value="1"/>
</dbReference>
<sequence length="406" mass="42812">MAVNLTEKTAEQLPDIDGIALYTAQAGVKKPGHTDLTLIAVAAGSTVGAVFTTNRFCAAPVHIAKSHLFDEDGVRALVINTGNANAGTGAQGRIDALAVCAAAARQIGCKPNQVLPFSTGVILEPLPADKIIAALPKMQPAFWNEAARAIMTTDTVPKAASREGKVGDKHTVRATGIAKGSGMIHPNMATMLGFIATDAKVSQPVLQLMTQEIADETFNTITVDGDTSTNDSFVIIATGKNSQSEIDNIADPRYAQLKELLCSLALELAQAIVRDGEGATKFITVRVENAKTRDEARQAAYAVARSPLVKTAFFASDPNLGRLLAAIGYAGVADLDTDLVEMYLDDILVAEHGGRAASYTEAQGQAVMSKAEITVRIKLHRGQAAATVYTCDLSHGYVSINADYRS</sequence>
<name>ARGJ_NEIMA</name>
<accession>P63573</accession>
<accession>A1IPQ1</accession>
<accession>Q9JRJ2</accession>
<evidence type="ECO:0000255" key="1">
    <source>
        <dbReference type="HAMAP-Rule" id="MF_01106"/>
    </source>
</evidence>